<sequence>MKKGNFMFKVLLMLIAGIFLSIDAFAQQITVKGIVKDTTGEPVIGANVVVKGTTTGTITDFDGNFQLSAKQGDIIVVSFIGYQPQELPVAAQMNVILKDDTEILDEVVVIGYGQVKKNDMTGSVMAIKPDELSKGITTNAQDMLSGKIAGVSVISNDGTPGGGAQIRIRGGSSLNASNDPLIVIDGLAIDNEGIKGMANGLSMVNPADIETLTVLKDASATAIYGSRASNGVIIITTKKGKNGQAPSVSYNGSVSFSKTQKRYDVLSGDEYRAYANQLWGDKLPADLGTANTDWQDQIFRTAVSTDHHVSINGGFKNLPYRVSLGYTDDNGIVKTSNFRRFTASVNLAPSFFEDHLKFNINAKFMNGKNRYADTGAAIGGALAIDPTRPVYSNEDPYQFTGGYWQNINSTTGFSNPDWKYTSNPNSPQNPLAALELKNDKANSNDFVGNVDVDYKFHFLPDLRLHASIGGEYAEGTQTTIVSPYSFGNNYYGWNGDVTQYKYNLSYNIYVQYIKSLGANDFDIMVGGEEQHFHRNGFEEGQGWDSYTQEPHDAKLREQTAYATRNTLVSYFGRLNYSLLNRYLFTFTMRWDGSSRFSKDNRWGTFPSLALGWKIKEENFLKDVNVLSDLKLRLGWGITGQQNIGDDFAYLPLYVVNNEYAQYPFGDTYYSTSRPKAFNENLKWEKTTTWNAGLDFGFLNGRITGGIDGYFRKTDDLLNSVKIPVGTNFNAQMTQNIGSLENYGMEFSINAKPIVTKDFTWDLSYNITWNHNEITKLTGGDDSDYYVEAGDKISRGNNTKVQAHKVGYAANSFYVYQQVYDENGKPIENMFVDRNGNGTIDSGDKYIYKKPAGDVLMGLTSKMQYKNFDFSFSLRASLNNYVYYDFLSNKANVSTSGLFSNNAYSNTSAEAVALGLSGQGDYMSDYFIHNASFLRCDNITLGYSFQNLWKTQTYKGVGGRVYATVQNPFIISKYKGLDPEVKSGIDANPYPRAMTFLLGLSLQF</sequence>
<gene>
    <name type="primary">susC</name>
    <name type="ordered locus">BT_3702</name>
</gene>
<reference key="1">
    <citation type="journal article" date="1996" name="J. Bacteriol.">
        <title>A Bacteroides thetaiotaomicron outer membrane protein that is essential for utilization of maltooligosaccharides and starch.</title>
        <authorList>
            <person name="Reeves A.R."/>
            <person name="D'Elia J.N."/>
            <person name="Frias J."/>
            <person name="Salyers A.A."/>
        </authorList>
    </citation>
    <scope>NUCLEOTIDE SEQUENCE [GENOMIC DNA]</scope>
    <scope>FUNCTION</scope>
    <scope>SUBCELLULAR LOCATION</scope>
    <scope>INDUCTION</scope>
    <scope>DISRUPTION PHENOTYPE</scope>
</reference>
<reference key="2">
    <citation type="journal article" date="2003" name="Science">
        <title>A genomic view of the human-Bacteroides thetaiotaomicron symbiosis.</title>
        <authorList>
            <person name="Xu J."/>
            <person name="Bjursell M.K."/>
            <person name="Himrod J."/>
            <person name="Deng S."/>
            <person name="Carmichael L.K."/>
            <person name="Chiang H.C."/>
            <person name="Hooper L.V."/>
            <person name="Gordon J.I."/>
        </authorList>
    </citation>
    <scope>NUCLEOTIDE SEQUENCE [LARGE SCALE GENOMIC DNA]</scope>
    <source>
        <strain>ATCC 29148 / DSM 2079 / JCM 5827 / CCUG 10774 / NCTC 10582 / VPI-5482 / E50</strain>
    </source>
</reference>
<reference key="3">
    <citation type="journal article" date="1997" name="J. Bacteriol.">
        <title>Characterization of four outer membrane proteins that play a role in utilization of starch by Bacteroides thetaiotaomicron.</title>
        <authorList>
            <person name="Reeves A.R."/>
            <person name="Wang G.R."/>
            <person name="Salyers A.A."/>
        </authorList>
    </citation>
    <scope>FUNCTION</scope>
    <source>
        <strain>ATCC 29148 / DSM 2079 / JCM 5827 / CCUG 10774 / NCTC 10582 / VPI-5482 / E50</strain>
    </source>
</reference>
<reference key="4">
    <citation type="journal article" date="2000" name="J. Bacteriol.">
        <title>Characterization of four outer membrane proteins involved in binding starch to the cell surface of Bacteroides thetaiotaomicron.</title>
        <authorList>
            <person name="Shipman J.A."/>
            <person name="Berleman J.E."/>
            <person name="Salyers A.A."/>
        </authorList>
    </citation>
    <scope>FUNCTION</scope>
    <source>
        <strain>ATCC 29148 / DSM 2079 / JCM 5827 / CCUG 10774 / NCTC 10582 / VPI-5482 / E50</strain>
    </source>
</reference>
<reference key="5">
    <citation type="journal article" date="2001" name="J. Bacteriol.">
        <title>Biochemical analysis of interactions between outer membrane proteins that contribute to starch utilization by Bacteroides thetaiotaomicron.</title>
        <authorList>
            <person name="Cho K.H."/>
            <person name="Salyers A.A."/>
        </authorList>
    </citation>
    <scope>FUNCTION</scope>
    <scope>INTERACTION WITH SUSD</scope>
    <source>
        <strain>ATCC 29148 / DSM 2079 / JCM 5827 / CCUG 10774 / NCTC 10582 / VPI-5482 / E50</strain>
    </source>
</reference>
<evidence type="ECO:0000255" key="1"/>
<evidence type="ECO:0000255" key="2">
    <source>
        <dbReference type="PROSITE-ProRule" id="PRU01360"/>
    </source>
</evidence>
<evidence type="ECO:0000269" key="3">
    <source>
    </source>
</evidence>
<evidence type="ECO:0000269" key="4">
    <source>
    </source>
</evidence>
<evidence type="ECO:0000269" key="5">
    <source>
    </source>
</evidence>
<evidence type="ECO:0000269" key="6">
    <source>
    </source>
</evidence>
<evidence type="ECO:0000305" key="7"/>
<dbReference type="EMBL" id="L49338">
    <property type="protein sequence ID" value="AAA95938.1"/>
    <property type="status" value="ALT_FRAME"/>
    <property type="molecule type" value="Genomic_DNA"/>
</dbReference>
<dbReference type="EMBL" id="AE015928">
    <property type="protein sequence ID" value="AAO78807.1"/>
    <property type="molecule type" value="Genomic_DNA"/>
</dbReference>
<dbReference type="PIR" id="JC6027">
    <property type="entry name" value="JC6027"/>
</dbReference>
<dbReference type="RefSeq" id="NP_812613.1">
    <property type="nucleotide sequence ID" value="NC_004663.1"/>
</dbReference>
<dbReference type="RefSeq" id="WP_011108938.1">
    <property type="nucleotide sequence ID" value="NC_004663.1"/>
</dbReference>
<dbReference type="SMR" id="Q8A1G1"/>
<dbReference type="STRING" id="226186.BT_3702"/>
<dbReference type="TCDB" id="1.B.14.6.1">
    <property type="family name" value="the outer membrane receptor (omr) family"/>
</dbReference>
<dbReference type="PaxDb" id="226186-BT_3702"/>
<dbReference type="EnsemblBacteria" id="AAO78807">
    <property type="protein sequence ID" value="AAO78807"/>
    <property type="gene ID" value="BT_3702"/>
</dbReference>
<dbReference type="KEGG" id="bth:BT_3702"/>
<dbReference type="PATRIC" id="fig|226186.12.peg.3762"/>
<dbReference type="eggNOG" id="COG1629">
    <property type="taxonomic scope" value="Bacteria"/>
</dbReference>
<dbReference type="eggNOG" id="COG4206">
    <property type="taxonomic scope" value="Bacteria"/>
</dbReference>
<dbReference type="HOGENOM" id="CLU_004317_0_2_10"/>
<dbReference type="InParanoid" id="Q8A1G1"/>
<dbReference type="OrthoDB" id="9768177at2"/>
<dbReference type="UniPathway" id="UPA00153"/>
<dbReference type="Proteomes" id="UP000001414">
    <property type="component" value="Chromosome"/>
</dbReference>
<dbReference type="GO" id="GO:0009279">
    <property type="term" value="C:cell outer membrane"/>
    <property type="evidence" value="ECO:0007669"/>
    <property type="project" value="UniProtKB-SubCell"/>
</dbReference>
<dbReference type="GO" id="GO:0019867">
    <property type="term" value="C:outer membrane"/>
    <property type="evidence" value="ECO:0000314"/>
    <property type="project" value="MENGO"/>
</dbReference>
<dbReference type="GO" id="GO:2001070">
    <property type="term" value="F:starch binding"/>
    <property type="evidence" value="ECO:0000314"/>
    <property type="project" value="MENGO"/>
</dbReference>
<dbReference type="GO" id="GO:0005983">
    <property type="term" value="P:starch catabolic process"/>
    <property type="evidence" value="ECO:0007669"/>
    <property type="project" value="UniProtKB-UniPathway"/>
</dbReference>
<dbReference type="FunFam" id="2.60.40.1120:FF:000003">
    <property type="entry name" value="Outer membrane protein Omp121"/>
    <property type="match status" value="1"/>
</dbReference>
<dbReference type="FunFam" id="2.170.130.10:FF:000009">
    <property type="entry name" value="SusC/RagA family TonB-linked outer membrane protein"/>
    <property type="match status" value="1"/>
</dbReference>
<dbReference type="Gene3D" id="2.60.40.1120">
    <property type="entry name" value="Carboxypeptidase-like, regulatory domain"/>
    <property type="match status" value="1"/>
</dbReference>
<dbReference type="Gene3D" id="2.40.170.20">
    <property type="entry name" value="TonB-dependent receptor, beta-barrel domain"/>
    <property type="match status" value="1"/>
</dbReference>
<dbReference type="Gene3D" id="2.170.130.10">
    <property type="entry name" value="TonB-dependent receptor, plug domain"/>
    <property type="match status" value="1"/>
</dbReference>
<dbReference type="InterPro" id="IPR008969">
    <property type="entry name" value="CarboxyPept-like_regulatory"/>
</dbReference>
<dbReference type="InterPro" id="IPR012910">
    <property type="entry name" value="Plug_dom"/>
</dbReference>
<dbReference type="InterPro" id="IPR037066">
    <property type="entry name" value="Plug_dom_sf"/>
</dbReference>
<dbReference type="InterPro" id="IPR023996">
    <property type="entry name" value="TonB-dep_OMP_SusC/RagA"/>
</dbReference>
<dbReference type="InterPro" id="IPR023997">
    <property type="entry name" value="TonB-dep_OMP_SusC/RagA_CS"/>
</dbReference>
<dbReference type="InterPro" id="IPR039426">
    <property type="entry name" value="TonB-dep_rcpt-like"/>
</dbReference>
<dbReference type="InterPro" id="IPR000531">
    <property type="entry name" value="TonB-dep_rcpt_b-brl"/>
</dbReference>
<dbReference type="InterPro" id="IPR036942">
    <property type="entry name" value="TonB_rcpt_b-brl_sf"/>
</dbReference>
<dbReference type="NCBIfam" id="TIGR04056">
    <property type="entry name" value="OMP_RagA_SusC"/>
    <property type="match status" value="1"/>
</dbReference>
<dbReference type="NCBIfam" id="TIGR04057">
    <property type="entry name" value="SusC_RagA_signa"/>
    <property type="match status" value="1"/>
</dbReference>
<dbReference type="Pfam" id="PF13715">
    <property type="entry name" value="CarbopepD_reg_2"/>
    <property type="match status" value="1"/>
</dbReference>
<dbReference type="Pfam" id="PF07715">
    <property type="entry name" value="Plug"/>
    <property type="match status" value="1"/>
</dbReference>
<dbReference type="Pfam" id="PF00593">
    <property type="entry name" value="TonB_dep_Rec_b-barrel"/>
    <property type="match status" value="1"/>
</dbReference>
<dbReference type="SUPFAM" id="SSF49464">
    <property type="entry name" value="Carboxypeptidase regulatory domain-like"/>
    <property type="match status" value="1"/>
</dbReference>
<dbReference type="SUPFAM" id="SSF56935">
    <property type="entry name" value="Porins"/>
    <property type="match status" value="1"/>
</dbReference>
<dbReference type="PROSITE" id="PS52016">
    <property type="entry name" value="TONB_DEPENDENT_REC_3"/>
    <property type="match status" value="1"/>
</dbReference>
<accession>Q8A1G1</accession>
<accession>Q45780</accession>
<feature type="signal peptide" evidence="1">
    <location>
        <begin position="1"/>
        <end position="26"/>
    </location>
</feature>
<feature type="chain" id="PRO_0000425882" description="TonB-dependent receptor SusC">
    <location>
        <begin position="27"/>
        <end position="1003"/>
    </location>
</feature>
<feature type="domain" description="TBDR plug" evidence="2">
    <location>
        <begin position="116"/>
        <end position="238"/>
    </location>
</feature>
<feature type="domain" description="TBDR beta-barrel" evidence="2">
    <location>
        <begin position="243"/>
        <end position="1003"/>
    </location>
</feature>
<feature type="sequence conflict" description="In Ref. 1; AAA95938." evidence="7" ref="1">
    <original>S</original>
    <variation>T</variation>
    <location>
        <position position="249"/>
    </location>
</feature>
<feature type="sequence conflict" description="In Ref. 1; AAA95938." evidence="7" ref="1">
    <original>A</original>
    <variation>G</variation>
    <location>
        <position position="441"/>
    </location>
</feature>
<feature type="sequence conflict" description="In Ref. 1; AAA95938." evidence="7" ref="1">
    <original>I</original>
    <variation>ISRGNNTKVQAHKVGYAANSFYV</variation>
    <location>
        <position position="792"/>
    </location>
</feature>
<feature type="sequence conflict" description="In Ref. 1; AAA95938." evidence="7" ref="1">
    <original>L</original>
    <variation>F</variation>
    <location>
        <position position="915"/>
    </location>
</feature>
<feature type="sequence conflict" description="In Ref. 1; AAA95938." evidence="7" ref="1">
    <original>D</original>
    <variation>DY</variation>
    <location>
        <position position="920"/>
    </location>
</feature>
<protein>
    <recommendedName>
        <fullName>TonB-dependent receptor SusC</fullName>
    </recommendedName>
    <alternativeName>
        <fullName>Starch-utilization system protein C</fullName>
    </alternativeName>
</protein>
<proteinExistence type="evidence at protein level"/>
<organism>
    <name type="scientific">Bacteroides thetaiotaomicron (strain ATCC 29148 / DSM 2079 / JCM 5827 / CCUG 10774 / NCTC 10582 / VPI-5482 / E50)</name>
    <dbReference type="NCBI Taxonomy" id="226186"/>
    <lineage>
        <taxon>Bacteria</taxon>
        <taxon>Pseudomonadati</taxon>
        <taxon>Bacteroidota</taxon>
        <taxon>Bacteroidia</taxon>
        <taxon>Bacteroidales</taxon>
        <taxon>Bacteroidaceae</taxon>
        <taxon>Bacteroides</taxon>
    </lineage>
</organism>
<comment type="function">
    <text evidence="3 4 5 6">Mediates transport of starch oligosaccharides from the surface of the outer membrane to the periplasm for subsequent degradation.</text>
</comment>
<comment type="pathway">
    <text>Glycan degradation; starch degradation.</text>
</comment>
<comment type="subunit">
    <text evidence="4">Interacts with SusD.</text>
</comment>
<comment type="subcellular location">
    <subcellularLocation>
        <location evidence="2">Cell outer membrane</location>
        <topology evidence="2">Multi-pass membrane protein</topology>
    </subcellularLocation>
</comment>
<comment type="induction">
    <text evidence="5">By maltose.</text>
</comment>
<comment type="disruption phenotype">
    <text evidence="5">Abolished ability to grow on starch.</text>
</comment>
<comment type="similarity">
    <text evidence="7">Belongs to the TonB-dependent receptor family.</text>
</comment>
<comment type="sequence caution" evidence="7">
    <conflict type="frameshift">
        <sequence resource="EMBL-CDS" id="AAA95938"/>
    </conflict>
</comment>
<name>SUSC_BACTN</name>
<keyword id="KW-0119">Carbohydrate metabolism</keyword>
<keyword id="KW-0998">Cell outer membrane</keyword>
<keyword id="KW-0472">Membrane</keyword>
<keyword id="KW-0675">Receptor</keyword>
<keyword id="KW-1185">Reference proteome</keyword>
<keyword id="KW-0732">Signal</keyword>
<keyword id="KW-0798">TonB box</keyword>
<keyword id="KW-0812">Transmembrane</keyword>
<keyword id="KW-1134">Transmembrane beta strand</keyword>
<keyword id="KW-0813">Transport</keyword>